<keyword id="KW-0028">Amino-acid biosynthesis</keyword>
<keyword id="KW-0170">Cobalt</keyword>
<keyword id="KW-0220">Diaminopimelate biosynthesis</keyword>
<keyword id="KW-0378">Hydrolase</keyword>
<keyword id="KW-0457">Lysine biosynthesis</keyword>
<keyword id="KW-0479">Metal-binding</keyword>
<keyword id="KW-0862">Zinc</keyword>
<organism>
    <name type="scientific">Burkholderia pseudomallei (strain 1106a)</name>
    <dbReference type="NCBI Taxonomy" id="357348"/>
    <lineage>
        <taxon>Bacteria</taxon>
        <taxon>Pseudomonadati</taxon>
        <taxon>Pseudomonadota</taxon>
        <taxon>Betaproteobacteria</taxon>
        <taxon>Burkholderiales</taxon>
        <taxon>Burkholderiaceae</taxon>
        <taxon>Burkholderia</taxon>
        <taxon>pseudomallei group</taxon>
    </lineage>
</organism>
<feature type="chain" id="PRO_0000375509" description="Succinyl-diaminopimelate desuccinylase">
    <location>
        <begin position="1"/>
        <end position="379"/>
    </location>
</feature>
<feature type="active site" evidence="1">
    <location>
        <position position="72"/>
    </location>
</feature>
<feature type="active site" description="Proton acceptor" evidence="1">
    <location>
        <position position="137"/>
    </location>
</feature>
<feature type="binding site" evidence="1">
    <location>
        <position position="70"/>
    </location>
    <ligand>
        <name>Zn(2+)</name>
        <dbReference type="ChEBI" id="CHEBI:29105"/>
        <label>1</label>
    </ligand>
</feature>
<feature type="binding site" evidence="1">
    <location>
        <position position="103"/>
    </location>
    <ligand>
        <name>Zn(2+)</name>
        <dbReference type="ChEBI" id="CHEBI:29105"/>
        <label>1</label>
    </ligand>
</feature>
<feature type="binding site" evidence="1">
    <location>
        <position position="103"/>
    </location>
    <ligand>
        <name>Zn(2+)</name>
        <dbReference type="ChEBI" id="CHEBI:29105"/>
        <label>2</label>
    </ligand>
</feature>
<feature type="binding site" evidence="1">
    <location>
        <position position="138"/>
    </location>
    <ligand>
        <name>Zn(2+)</name>
        <dbReference type="ChEBI" id="CHEBI:29105"/>
        <label>2</label>
    </ligand>
</feature>
<feature type="binding site" evidence="1">
    <location>
        <position position="166"/>
    </location>
    <ligand>
        <name>Zn(2+)</name>
        <dbReference type="ChEBI" id="CHEBI:29105"/>
        <label>1</label>
    </ligand>
</feature>
<feature type="binding site" evidence="1">
    <location>
        <position position="352"/>
    </location>
    <ligand>
        <name>Zn(2+)</name>
        <dbReference type="ChEBI" id="CHEBI:29105"/>
        <label>2</label>
    </ligand>
</feature>
<accession>A3NWP5</accession>
<gene>
    <name evidence="1" type="primary">dapE</name>
    <name type="ordered locus">BURPS1106A_2507</name>
</gene>
<dbReference type="EC" id="3.5.1.18" evidence="1"/>
<dbReference type="EMBL" id="CP000572">
    <property type="protein sequence ID" value="ABN91669.1"/>
    <property type="molecule type" value="Genomic_DNA"/>
</dbReference>
<dbReference type="RefSeq" id="WP_004521179.1">
    <property type="nucleotide sequence ID" value="NC_009076.1"/>
</dbReference>
<dbReference type="SMR" id="A3NWP5"/>
<dbReference type="GeneID" id="93060712"/>
<dbReference type="KEGG" id="bpl:BURPS1106A_2507"/>
<dbReference type="HOGENOM" id="CLU_021802_4_0_4"/>
<dbReference type="UniPathway" id="UPA00034">
    <property type="reaction ID" value="UER00021"/>
</dbReference>
<dbReference type="Proteomes" id="UP000006738">
    <property type="component" value="Chromosome I"/>
</dbReference>
<dbReference type="GO" id="GO:0008777">
    <property type="term" value="F:acetylornithine deacetylase activity"/>
    <property type="evidence" value="ECO:0007669"/>
    <property type="project" value="TreeGrafter"/>
</dbReference>
<dbReference type="GO" id="GO:0050897">
    <property type="term" value="F:cobalt ion binding"/>
    <property type="evidence" value="ECO:0007669"/>
    <property type="project" value="UniProtKB-UniRule"/>
</dbReference>
<dbReference type="GO" id="GO:0009014">
    <property type="term" value="F:succinyl-diaminopimelate desuccinylase activity"/>
    <property type="evidence" value="ECO:0007669"/>
    <property type="project" value="UniProtKB-UniRule"/>
</dbReference>
<dbReference type="GO" id="GO:0008270">
    <property type="term" value="F:zinc ion binding"/>
    <property type="evidence" value="ECO:0007669"/>
    <property type="project" value="UniProtKB-UniRule"/>
</dbReference>
<dbReference type="GO" id="GO:0019877">
    <property type="term" value="P:diaminopimelate biosynthetic process"/>
    <property type="evidence" value="ECO:0007669"/>
    <property type="project" value="UniProtKB-UniRule"/>
</dbReference>
<dbReference type="GO" id="GO:0006526">
    <property type="term" value="P:L-arginine biosynthetic process"/>
    <property type="evidence" value="ECO:0007669"/>
    <property type="project" value="TreeGrafter"/>
</dbReference>
<dbReference type="GO" id="GO:0009089">
    <property type="term" value="P:lysine biosynthetic process via diaminopimelate"/>
    <property type="evidence" value="ECO:0007669"/>
    <property type="project" value="UniProtKB-UniRule"/>
</dbReference>
<dbReference type="CDD" id="cd03891">
    <property type="entry name" value="M20_DapE_proteobac"/>
    <property type="match status" value="1"/>
</dbReference>
<dbReference type="FunFam" id="3.30.70.360:FF:000011">
    <property type="entry name" value="Succinyl-diaminopimelate desuccinylase"/>
    <property type="match status" value="1"/>
</dbReference>
<dbReference type="FunFam" id="3.40.630.10:FF:000005">
    <property type="entry name" value="Succinyl-diaminopimelate desuccinylase"/>
    <property type="match status" value="1"/>
</dbReference>
<dbReference type="Gene3D" id="3.40.630.10">
    <property type="entry name" value="Zn peptidases"/>
    <property type="match status" value="2"/>
</dbReference>
<dbReference type="HAMAP" id="MF_01690">
    <property type="entry name" value="DapE"/>
    <property type="match status" value="1"/>
</dbReference>
<dbReference type="InterPro" id="IPR001261">
    <property type="entry name" value="ArgE/DapE_CS"/>
</dbReference>
<dbReference type="InterPro" id="IPR036264">
    <property type="entry name" value="Bact_exopeptidase_dim_dom"/>
</dbReference>
<dbReference type="InterPro" id="IPR005941">
    <property type="entry name" value="DapE_proteobac"/>
</dbReference>
<dbReference type="InterPro" id="IPR002933">
    <property type="entry name" value="Peptidase_M20"/>
</dbReference>
<dbReference type="InterPro" id="IPR011650">
    <property type="entry name" value="Peptidase_M20_dimer"/>
</dbReference>
<dbReference type="InterPro" id="IPR050072">
    <property type="entry name" value="Peptidase_M20A"/>
</dbReference>
<dbReference type="NCBIfam" id="TIGR01246">
    <property type="entry name" value="dapE_proteo"/>
    <property type="match status" value="1"/>
</dbReference>
<dbReference type="NCBIfam" id="NF009557">
    <property type="entry name" value="PRK13009.1"/>
    <property type="match status" value="1"/>
</dbReference>
<dbReference type="PANTHER" id="PTHR43808">
    <property type="entry name" value="ACETYLORNITHINE DEACETYLASE"/>
    <property type="match status" value="1"/>
</dbReference>
<dbReference type="PANTHER" id="PTHR43808:SF31">
    <property type="entry name" value="N-ACETYL-L-CITRULLINE DEACETYLASE"/>
    <property type="match status" value="1"/>
</dbReference>
<dbReference type="Pfam" id="PF07687">
    <property type="entry name" value="M20_dimer"/>
    <property type="match status" value="1"/>
</dbReference>
<dbReference type="Pfam" id="PF01546">
    <property type="entry name" value="Peptidase_M20"/>
    <property type="match status" value="1"/>
</dbReference>
<dbReference type="SUPFAM" id="SSF55031">
    <property type="entry name" value="Bacterial exopeptidase dimerisation domain"/>
    <property type="match status" value="1"/>
</dbReference>
<dbReference type="SUPFAM" id="SSF53187">
    <property type="entry name" value="Zn-dependent exopeptidases"/>
    <property type="match status" value="1"/>
</dbReference>
<dbReference type="PROSITE" id="PS00758">
    <property type="entry name" value="ARGE_DAPE_CPG2_1"/>
    <property type="match status" value="1"/>
</dbReference>
<sequence>MSATLALTEQLIARASVTPDDQHCQQLMIERLAALGFECETIASHGVTNFWAVKRGTAGRAGKLLAFAGHTDVVPTGPLEQWSSPPFVPTHRDGKLYGRGAADMKTSLAGFVVAAEEFVAAHPQHRGSIGFLITSDEEGPATDGTVKVVEALAARGERLDYCIVGEPTSTATLGDVVKNGRRGSMSGELVVKGVQGHIAYPHLAKNPIHLLAPALAELAAEQWDEGNEYFPPTTWQVSNLRAGTGATNVIPGHADLLFNFRFSTASTVEGLQARVHAILDRHGLDYTLNWSVSGLPFLTPRGELSNALDAAIRAETGVSPELSTTGGTSDGRFIARICPQVIEFGPPNASIHKIDEHIDVRFVDPLKNVYRRVLEQLIA</sequence>
<reference key="1">
    <citation type="journal article" date="2010" name="Genome Biol. Evol.">
        <title>Continuing evolution of Burkholderia mallei through genome reduction and large-scale rearrangements.</title>
        <authorList>
            <person name="Losada L."/>
            <person name="Ronning C.M."/>
            <person name="DeShazer D."/>
            <person name="Woods D."/>
            <person name="Fedorova N."/>
            <person name="Kim H.S."/>
            <person name="Shabalina S.A."/>
            <person name="Pearson T.R."/>
            <person name="Brinkac L."/>
            <person name="Tan P."/>
            <person name="Nandi T."/>
            <person name="Crabtree J."/>
            <person name="Badger J."/>
            <person name="Beckstrom-Sternberg S."/>
            <person name="Saqib M."/>
            <person name="Schutzer S.E."/>
            <person name="Keim P."/>
            <person name="Nierman W.C."/>
        </authorList>
    </citation>
    <scope>NUCLEOTIDE SEQUENCE [LARGE SCALE GENOMIC DNA]</scope>
    <source>
        <strain>1106a</strain>
    </source>
</reference>
<comment type="function">
    <text evidence="1">Catalyzes the hydrolysis of N-succinyl-L,L-diaminopimelic acid (SDAP), forming succinate and LL-2,6-diaminopimelate (DAP), an intermediate involved in the bacterial biosynthesis of lysine and meso-diaminopimelic acid, an essential component of bacterial cell walls.</text>
</comment>
<comment type="catalytic activity">
    <reaction evidence="1">
        <text>N-succinyl-(2S,6S)-2,6-diaminopimelate + H2O = (2S,6S)-2,6-diaminopimelate + succinate</text>
        <dbReference type="Rhea" id="RHEA:22608"/>
        <dbReference type="ChEBI" id="CHEBI:15377"/>
        <dbReference type="ChEBI" id="CHEBI:30031"/>
        <dbReference type="ChEBI" id="CHEBI:57609"/>
        <dbReference type="ChEBI" id="CHEBI:58087"/>
        <dbReference type="EC" id="3.5.1.18"/>
    </reaction>
</comment>
<comment type="cofactor">
    <cofactor evidence="1">
        <name>Zn(2+)</name>
        <dbReference type="ChEBI" id="CHEBI:29105"/>
    </cofactor>
    <cofactor evidence="1">
        <name>Co(2+)</name>
        <dbReference type="ChEBI" id="CHEBI:48828"/>
    </cofactor>
    <text evidence="1">Binds 2 Zn(2+) or Co(2+) ions per subunit.</text>
</comment>
<comment type="pathway">
    <text evidence="1">Amino-acid biosynthesis; L-lysine biosynthesis via DAP pathway; LL-2,6-diaminopimelate from (S)-tetrahydrodipicolinate (succinylase route): step 3/3.</text>
</comment>
<comment type="subunit">
    <text evidence="1">Homodimer.</text>
</comment>
<comment type="similarity">
    <text evidence="1">Belongs to the peptidase M20A family. DapE subfamily.</text>
</comment>
<protein>
    <recommendedName>
        <fullName evidence="1">Succinyl-diaminopimelate desuccinylase</fullName>
        <shortName evidence="1">SDAP desuccinylase</shortName>
        <ecNumber evidence="1">3.5.1.18</ecNumber>
    </recommendedName>
    <alternativeName>
        <fullName evidence="1">N-succinyl-LL-2,6-diaminoheptanedioate amidohydrolase</fullName>
    </alternativeName>
</protein>
<name>DAPE_BURP0</name>
<proteinExistence type="inferred from homology"/>
<evidence type="ECO:0000255" key="1">
    <source>
        <dbReference type="HAMAP-Rule" id="MF_01690"/>
    </source>
</evidence>